<comment type="function">
    <text evidence="1">Involved in ribosome biogenesis; more specifically in 18S rRNA pseudouridylation and in cleavage of pre-rRNA.</text>
</comment>
<comment type="similarity">
    <text evidence="1">Belongs to the NOP10 family.</text>
</comment>
<proteinExistence type="inferred from homology"/>
<accession>A6UQY9</accession>
<name>NOP10_METVS</name>
<feature type="chain" id="PRO_1000047027" description="Ribosome biogenesis protein Nop10">
    <location>
        <begin position="1"/>
        <end position="52"/>
    </location>
</feature>
<organism>
    <name type="scientific">Methanococcus vannielii (strain ATCC 35089 / DSM 1224 / JCM 13029 / OCM 148 / SB)</name>
    <dbReference type="NCBI Taxonomy" id="406327"/>
    <lineage>
        <taxon>Archaea</taxon>
        <taxon>Methanobacteriati</taxon>
        <taxon>Methanobacteriota</taxon>
        <taxon>Methanomada group</taxon>
        <taxon>Methanococci</taxon>
        <taxon>Methanococcales</taxon>
        <taxon>Methanococcaceae</taxon>
        <taxon>Methanococcus</taxon>
    </lineage>
</organism>
<dbReference type="EMBL" id="CP000742">
    <property type="protein sequence ID" value="ABR54911.1"/>
    <property type="molecule type" value="Genomic_DNA"/>
</dbReference>
<dbReference type="RefSeq" id="WP_012065840.1">
    <property type="nucleotide sequence ID" value="NC_009634.1"/>
</dbReference>
<dbReference type="SMR" id="A6UQY9"/>
<dbReference type="STRING" id="406327.Mevan_1008"/>
<dbReference type="GeneID" id="5325643"/>
<dbReference type="KEGG" id="mvn:Mevan_1008"/>
<dbReference type="eggNOG" id="arCOG00906">
    <property type="taxonomic scope" value="Archaea"/>
</dbReference>
<dbReference type="HOGENOM" id="CLU_196480_1_0_2"/>
<dbReference type="OrthoDB" id="7259at2157"/>
<dbReference type="Proteomes" id="UP000001107">
    <property type="component" value="Chromosome"/>
</dbReference>
<dbReference type="GO" id="GO:1990904">
    <property type="term" value="C:ribonucleoprotein complex"/>
    <property type="evidence" value="ECO:0007669"/>
    <property type="project" value="UniProtKB-KW"/>
</dbReference>
<dbReference type="GO" id="GO:0030515">
    <property type="term" value="F:snoRNA binding"/>
    <property type="evidence" value="ECO:0007669"/>
    <property type="project" value="InterPro"/>
</dbReference>
<dbReference type="GO" id="GO:0001522">
    <property type="term" value="P:pseudouridine synthesis"/>
    <property type="evidence" value="ECO:0007669"/>
    <property type="project" value="InterPro"/>
</dbReference>
<dbReference type="GO" id="GO:0006364">
    <property type="term" value="P:rRNA processing"/>
    <property type="evidence" value="ECO:0007669"/>
    <property type="project" value="UniProtKB-UniRule"/>
</dbReference>
<dbReference type="Gene3D" id="2.20.28.40">
    <property type="entry name" value="H/ACA ribonucleoprotein complex, subunit Nop10"/>
    <property type="match status" value="1"/>
</dbReference>
<dbReference type="HAMAP" id="MF_00803">
    <property type="entry name" value="Nop10"/>
    <property type="match status" value="1"/>
</dbReference>
<dbReference type="InterPro" id="IPR007264">
    <property type="entry name" value="H/ACA_rnp_Nop10"/>
</dbReference>
<dbReference type="InterPro" id="IPR036756">
    <property type="entry name" value="H/ACA_rnp_Nop10_sf"/>
</dbReference>
<dbReference type="InterPro" id="IPR023532">
    <property type="entry name" value="Nop10_arc-typ"/>
</dbReference>
<dbReference type="NCBIfam" id="NF009623">
    <property type="entry name" value="PRK13130.1"/>
    <property type="match status" value="1"/>
</dbReference>
<dbReference type="Pfam" id="PF04135">
    <property type="entry name" value="Nop10p"/>
    <property type="match status" value="1"/>
</dbReference>
<dbReference type="SUPFAM" id="SSF144210">
    <property type="entry name" value="Nop10-like SnoRNP"/>
    <property type="match status" value="1"/>
</dbReference>
<sequence>MQMKKCPKCGKYTLKEYCIDCNEKAGTVKPPRFSPVDKYGKYRRMLKKSLKK</sequence>
<gene>
    <name evidence="1" type="primary">nop10</name>
    <name type="ordered locus">Mevan_1008</name>
</gene>
<protein>
    <recommendedName>
        <fullName evidence="1">Ribosome biogenesis protein Nop10</fullName>
    </recommendedName>
</protein>
<keyword id="KW-0687">Ribonucleoprotein</keyword>
<keyword id="KW-0690">Ribosome biogenesis</keyword>
<keyword id="KW-0698">rRNA processing</keyword>
<reference key="1">
    <citation type="submission" date="2007-06" db="EMBL/GenBank/DDBJ databases">
        <title>Complete sequence of Methanococcus vannielii SB.</title>
        <authorList>
            <consortium name="US DOE Joint Genome Institute"/>
            <person name="Copeland A."/>
            <person name="Lucas S."/>
            <person name="Lapidus A."/>
            <person name="Barry K."/>
            <person name="Glavina del Rio T."/>
            <person name="Dalin E."/>
            <person name="Tice H."/>
            <person name="Pitluck S."/>
            <person name="Chain P."/>
            <person name="Malfatti S."/>
            <person name="Shin M."/>
            <person name="Vergez L."/>
            <person name="Schmutz J."/>
            <person name="Larimer F."/>
            <person name="Land M."/>
            <person name="Hauser L."/>
            <person name="Kyrpides N."/>
            <person name="Anderson I."/>
            <person name="Sieprawska-Lupa M."/>
            <person name="Whitman W.B."/>
            <person name="Richardson P."/>
        </authorList>
    </citation>
    <scope>NUCLEOTIDE SEQUENCE [LARGE SCALE GENOMIC DNA]</scope>
    <source>
        <strain>ATCC 35089 / DSM 1224 / JCM 13029 / OCM 148 / SB</strain>
    </source>
</reference>
<evidence type="ECO:0000255" key="1">
    <source>
        <dbReference type="HAMAP-Rule" id="MF_00803"/>
    </source>
</evidence>